<protein>
    <recommendedName>
        <fullName evidence="1">Aspartate carbamoyltransferase catalytic subunit</fullName>
        <ecNumber evidence="1">2.1.3.2</ecNumber>
    </recommendedName>
    <alternativeName>
        <fullName evidence="1">Aspartate transcarbamylase</fullName>
        <shortName evidence="1">ATCase</shortName>
    </alternativeName>
</protein>
<keyword id="KW-0665">Pyrimidine biosynthesis</keyword>
<keyword id="KW-1185">Reference proteome</keyword>
<keyword id="KW-0808">Transferase</keyword>
<gene>
    <name evidence="1" type="primary">pyrB</name>
    <name type="ordered locus">Dole_0514</name>
</gene>
<sequence>MGLSTRDILDMGSLSRKDISLVLDTARSMKEISLRPVKKVPTLRGKTVVSFFYEPSTRTKVSFDVAAKRLSADSISLSVATSSMTKGETLLDTVKNLERMSPDVVVIRHSSAGVPHMLARHVSVPVINAGDGMHAHPSQALLDMMTVQEKKGRIEGLRLAIIGDIARSRVARSNVEGFLKMGASVVLAAPPTMIPVGVETFGADVTHNVDEAIAGADVIMMLRIQKERAAAFLFSTVREYARTYGLTANRLKNAKKDVLIMHPGPVNRGVEIAPEVADGPYSVILDQVENGVAVRMALFYLVMGGQRDAGD</sequence>
<name>PYRB_DESOH</name>
<feature type="chain" id="PRO_1000088759" description="Aspartate carbamoyltransferase catalytic subunit">
    <location>
        <begin position="1"/>
        <end position="311"/>
    </location>
</feature>
<feature type="binding site" evidence="1">
    <location>
        <position position="58"/>
    </location>
    <ligand>
        <name>carbamoyl phosphate</name>
        <dbReference type="ChEBI" id="CHEBI:58228"/>
    </ligand>
</feature>
<feature type="binding site" evidence="1">
    <location>
        <position position="59"/>
    </location>
    <ligand>
        <name>carbamoyl phosphate</name>
        <dbReference type="ChEBI" id="CHEBI:58228"/>
    </ligand>
</feature>
<feature type="binding site" evidence="1">
    <location>
        <position position="86"/>
    </location>
    <ligand>
        <name>L-aspartate</name>
        <dbReference type="ChEBI" id="CHEBI:29991"/>
    </ligand>
</feature>
<feature type="binding site" evidence="1">
    <location>
        <position position="108"/>
    </location>
    <ligand>
        <name>carbamoyl phosphate</name>
        <dbReference type="ChEBI" id="CHEBI:58228"/>
    </ligand>
</feature>
<feature type="binding site" evidence="1">
    <location>
        <position position="136"/>
    </location>
    <ligand>
        <name>carbamoyl phosphate</name>
        <dbReference type="ChEBI" id="CHEBI:58228"/>
    </ligand>
</feature>
<feature type="binding site" evidence="1">
    <location>
        <position position="139"/>
    </location>
    <ligand>
        <name>carbamoyl phosphate</name>
        <dbReference type="ChEBI" id="CHEBI:58228"/>
    </ligand>
</feature>
<feature type="binding site" evidence="1">
    <location>
        <position position="169"/>
    </location>
    <ligand>
        <name>L-aspartate</name>
        <dbReference type="ChEBI" id="CHEBI:29991"/>
    </ligand>
</feature>
<feature type="binding site" evidence="1">
    <location>
        <position position="223"/>
    </location>
    <ligand>
        <name>L-aspartate</name>
        <dbReference type="ChEBI" id="CHEBI:29991"/>
    </ligand>
</feature>
<feature type="binding site" evidence="1">
    <location>
        <position position="264"/>
    </location>
    <ligand>
        <name>carbamoyl phosphate</name>
        <dbReference type="ChEBI" id="CHEBI:58228"/>
    </ligand>
</feature>
<feature type="binding site" evidence="1">
    <location>
        <position position="265"/>
    </location>
    <ligand>
        <name>carbamoyl phosphate</name>
        <dbReference type="ChEBI" id="CHEBI:58228"/>
    </ligand>
</feature>
<proteinExistence type="inferred from homology"/>
<evidence type="ECO:0000255" key="1">
    <source>
        <dbReference type="HAMAP-Rule" id="MF_00001"/>
    </source>
</evidence>
<accession>A8ZU12</accession>
<organism>
    <name type="scientific">Desulfosudis oleivorans (strain DSM 6200 / JCM 39069 / Hxd3)</name>
    <name type="common">Desulfococcus oleovorans</name>
    <dbReference type="NCBI Taxonomy" id="96561"/>
    <lineage>
        <taxon>Bacteria</taxon>
        <taxon>Pseudomonadati</taxon>
        <taxon>Thermodesulfobacteriota</taxon>
        <taxon>Desulfobacteria</taxon>
        <taxon>Desulfobacterales</taxon>
        <taxon>Desulfosudaceae</taxon>
        <taxon>Desulfosudis</taxon>
    </lineage>
</organism>
<reference key="1">
    <citation type="submission" date="2007-10" db="EMBL/GenBank/DDBJ databases">
        <title>Complete sequence of Desulfococcus oleovorans Hxd3.</title>
        <authorList>
            <consortium name="US DOE Joint Genome Institute"/>
            <person name="Copeland A."/>
            <person name="Lucas S."/>
            <person name="Lapidus A."/>
            <person name="Barry K."/>
            <person name="Glavina del Rio T."/>
            <person name="Dalin E."/>
            <person name="Tice H."/>
            <person name="Pitluck S."/>
            <person name="Kiss H."/>
            <person name="Brettin T."/>
            <person name="Bruce D."/>
            <person name="Detter J.C."/>
            <person name="Han C."/>
            <person name="Schmutz J."/>
            <person name="Larimer F."/>
            <person name="Land M."/>
            <person name="Hauser L."/>
            <person name="Kyrpides N."/>
            <person name="Kim E."/>
            <person name="Wawrik B."/>
            <person name="Richardson P."/>
        </authorList>
    </citation>
    <scope>NUCLEOTIDE SEQUENCE [LARGE SCALE GENOMIC DNA]</scope>
    <source>
        <strain>DSM 6200 / JCM 39069 / Hxd3</strain>
    </source>
</reference>
<dbReference type="EC" id="2.1.3.2" evidence="1"/>
<dbReference type="EMBL" id="CP000859">
    <property type="protein sequence ID" value="ABW66324.1"/>
    <property type="molecule type" value="Genomic_DNA"/>
</dbReference>
<dbReference type="RefSeq" id="WP_012173943.1">
    <property type="nucleotide sequence ID" value="NC_009943.1"/>
</dbReference>
<dbReference type="SMR" id="A8ZU12"/>
<dbReference type="STRING" id="96561.Dole_0514"/>
<dbReference type="KEGG" id="dol:Dole_0514"/>
<dbReference type="eggNOG" id="COG0540">
    <property type="taxonomic scope" value="Bacteria"/>
</dbReference>
<dbReference type="HOGENOM" id="CLU_043846_2_0_7"/>
<dbReference type="OrthoDB" id="9774690at2"/>
<dbReference type="UniPathway" id="UPA00070">
    <property type="reaction ID" value="UER00116"/>
</dbReference>
<dbReference type="Proteomes" id="UP000008561">
    <property type="component" value="Chromosome"/>
</dbReference>
<dbReference type="GO" id="GO:0005829">
    <property type="term" value="C:cytosol"/>
    <property type="evidence" value="ECO:0007669"/>
    <property type="project" value="TreeGrafter"/>
</dbReference>
<dbReference type="GO" id="GO:0016597">
    <property type="term" value="F:amino acid binding"/>
    <property type="evidence" value="ECO:0007669"/>
    <property type="project" value="InterPro"/>
</dbReference>
<dbReference type="GO" id="GO:0004070">
    <property type="term" value="F:aspartate carbamoyltransferase activity"/>
    <property type="evidence" value="ECO:0007669"/>
    <property type="project" value="UniProtKB-UniRule"/>
</dbReference>
<dbReference type="GO" id="GO:0006207">
    <property type="term" value="P:'de novo' pyrimidine nucleobase biosynthetic process"/>
    <property type="evidence" value="ECO:0007669"/>
    <property type="project" value="InterPro"/>
</dbReference>
<dbReference type="GO" id="GO:0044205">
    <property type="term" value="P:'de novo' UMP biosynthetic process"/>
    <property type="evidence" value="ECO:0007669"/>
    <property type="project" value="UniProtKB-UniRule"/>
</dbReference>
<dbReference type="GO" id="GO:0006520">
    <property type="term" value="P:amino acid metabolic process"/>
    <property type="evidence" value="ECO:0007669"/>
    <property type="project" value="InterPro"/>
</dbReference>
<dbReference type="FunFam" id="3.40.50.1370:FF:000007">
    <property type="entry name" value="Aspartate carbamoyltransferase"/>
    <property type="match status" value="1"/>
</dbReference>
<dbReference type="Gene3D" id="3.40.50.1370">
    <property type="entry name" value="Aspartate/ornithine carbamoyltransferase"/>
    <property type="match status" value="2"/>
</dbReference>
<dbReference type="HAMAP" id="MF_00001">
    <property type="entry name" value="Asp_carb_tr"/>
    <property type="match status" value="1"/>
</dbReference>
<dbReference type="InterPro" id="IPR006132">
    <property type="entry name" value="Asp/Orn_carbamoyltranf_P-bd"/>
</dbReference>
<dbReference type="InterPro" id="IPR006130">
    <property type="entry name" value="Asp/Orn_carbamoylTrfase"/>
</dbReference>
<dbReference type="InterPro" id="IPR036901">
    <property type="entry name" value="Asp/Orn_carbamoylTrfase_sf"/>
</dbReference>
<dbReference type="InterPro" id="IPR002082">
    <property type="entry name" value="Asp_carbamoyltransf"/>
</dbReference>
<dbReference type="InterPro" id="IPR006131">
    <property type="entry name" value="Asp_carbamoyltransf_Asp/Orn-bd"/>
</dbReference>
<dbReference type="NCBIfam" id="TIGR00670">
    <property type="entry name" value="asp_carb_tr"/>
    <property type="match status" value="1"/>
</dbReference>
<dbReference type="NCBIfam" id="NF002032">
    <property type="entry name" value="PRK00856.1"/>
    <property type="match status" value="1"/>
</dbReference>
<dbReference type="PANTHER" id="PTHR45753:SF6">
    <property type="entry name" value="ASPARTATE CARBAMOYLTRANSFERASE"/>
    <property type="match status" value="1"/>
</dbReference>
<dbReference type="PANTHER" id="PTHR45753">
    <property type="entry name" value="ORNITHINE CARBAMOYLTRANSFERASE, MITOCHONDRIAL"/>
    <property type="match status" value="1"/>
</dbReference>
<dbReference type="Pfam" id="PF00185">
    <property type="entry name" value="OTCace"/>
    <property type="match status" value="1"/>
</dbReference>
<dbReference type="Pfam" id="PF02729">
    <property type="entry name" value="OTCace_N"/>
    <property type="match status" value="1"/>
</dbReference>
<dbReference type="PRINTS" id="PR00100">
    <property type="entry name" value="AOTCASE"/>
</dbReference>
<dbReference type="PRINTS" id="PR00101">
    <property type="entry name" value="ATCASE"/>
</dbReference>
<dbReference type="SUPFAM" id="SSF53671">
    <property type="entry name" value="Aspartate/ornithine carbamoyltransferase"/>
    <property type="match status" value="1"/>
</dbReference>
<dbReference type="PROSITE" id="PS00097">
    <property type="entry name" value="CARBAMOYLTRANSFERASE"/>
    <property type="match status" value="1"/>
</dbReference>
<comment type="function">
    <text evidence="1">Catalyzes the condensation of carbamoyl phosphate and aspartate to form carbamoyl aspartate and inorganic phosphate, the committed step in the de novo pyrimidine nucleotide biosynthesis pathway.</text>
</comment>
<comment type="catalytic activity">
    <reaction evidence="1">
        <text>carbamoyl phosphate + L-aspartate = N-carbamoyl-L-aspartate + phosphate + H(+)</text>
        <dbReference type="Rhea" id="RHEA:20013"/>
        <dbReference type="ChEBI" id="CHEBI:15378"/>
        <dbReference type="ChEBI" id="CHEBI:29991"/>
        <dbReference type="ChEBI" id="CHEBI:32814"/>
        <dbReference type="ChEBI" id="CHEBI:43474"/>
        <dbReference type="ChEBI" id="CHEBI:58228"/>
        <dbReference type="EC" id="2.1.3.2"/>
    </reaction>
</comment>
<comment type="pathway">
    <text evidence="1">Pyrimidine metabolism; UMP biosynthesis via de novo pathway; (S)-dihydroorotate from bicarbonate: step 2/3.</text>
</comment>
<comment type="subunit">
    <text evidence="1">Heterododecamer (2C3:3R2) of six catalytic PyrB chains organized as two trimers (C3), and six regulatory PyrI chains organized as three dimers (R2).</text>
</comment>
<comment type="similarity">
    <text evidence="1">Belongs to the aspartate/ornithine carbamoyltransferase superfamily. ATCase family.</text>
</comment>